<comment type="function">
    <text evidence="1">Required for chromosome condensation and partitioning.</text>
</comment>
<comment type="subunit">
    <text evidence="1">Homodimer.</text>
</comment>
<comment type="subcellular location">
    <subcellularLocation>
        <location evidence="1">Cytoplasm</location>
    </subcellularLocation>
</comment>
<comment type="domain">
    <text evidence="1">Contains large globular domains required for ATP hydrolysis at each terminus and a third globular domain forming a flexible SMC hinge near the middle of the molecule. These domains are separated by coiled-coil structures.</text>
</comment>
<comment type="similarity">
    <text evidence="1">Belongs to the SMC family.</text>
</comment>
<comment type="sequence caution" evidence="2">
    <conflict type="erroneous initiation">
        <sequence resource="EMBL-CDS" id="BAD80238"/>
    </conflict>
    <text>Truncated N-terminus.</text>
</comment>
<evidence type="ECO:0000255" key="1">
    <source>
        <dbReference type="HAMAP-Rule" id="MF_01894"/>
    </source>
</evidence>
<evidence type="ECO:0000305" key="2"/>
<proteinExistence type="inferred from homology"/>
<name>SMC_SYNP6</name>
<sequence length="1195" mass="135269">MVYIKQIELSHFKSFGGTTSLPLLPEFTVVTGPNGSGKSNILDALLFALGLSSSKGMRADRLPDLVNSTYASRSRSTVETLVTVTFALDDWQPEAEETEEGEGTGLQPGMAEWTVSRKLRVTPSGTYTSTYAMNGEACTLQQLHEQLSRLRIYPEGYNVVLQGDVTNIISMSPRDRRQIIDELAGVAQFDRKIEQAKGKLEAVKEREDRCRIVEQELIEQRDRLAKDREKAQKYQALRQEQATKQSWEAVLRWRAGQRQVQALQRSLAQLATDAATDQQTQQTLEQQIQQTEATLDRLNQRVKALGEEELLKLQAALAQQEAEQRQSQRQQQELVESQTQTQQQIQALLQTQAQLQTEGQQQAEQARTLQTTIAQTLQPQYQQALEQVEAARQSAHALAAQSQDWVTRQTSLRQQADAIAAQVEPQRAEQAQLQERQTQLQQQLEATQSALVTVTAELETETEQAEGDRAALSQAEAAVVTAADQLVRLEEELQIQQETRDRLLKEQRDKQRQLDRQESLRQAMQETQGTAAARLILDTGLPGVHGLVAQLGRVEPRYQLALEVAAGGRLGYLVVDDDGVASAGIELLKQKKAGRITFLPLNRIRAGKQPEIPRWQQPEGLVDLAIALVDCDDRYREVFKFVLGGTVVFERLDQARRYMGQYRIVTLDGELLETSGAMTGGSIARRSGGLSFGSPDSGESAEVRAIRDRLEQLEVILDRSELQILNLQAAIKDAASTLSDRRQQQREQQLTVQQRQQTLQRLQQQQQQLNAELQQRQQQASQAQARLAALALELPAALKQLKTLRQALAELEDSPIHGEWQQRQTLLQQQEALLQQQETALRQAEQQLQQLQTDQKRLQERAIAARTQVSQLRQQQGEQLNRLAQLDEQQRQQATAIAQLQQRQAQLEAQLGQEKVDRDRTERQLQEQRSQRQNLVWQQEKRQQQQQELQQQLTDLEVQLQAEQQELPQPLPDIPEMVQQQGIEALQHELRSLAKRIQAMEPVNMLALEEYERTQARLEELSEKLTTIEAERTELLLRIENFTTLRRRAFMESFEAIDRNFQEIFAHLSDGDGSLQLDNPEDPFSSGLNLIAHPKGKPVRRLASMSGGEKSLTALSFIFALQRYRPSPFYALDEVDSFLDGANVERLARVIRQQAQAAQFIVVSHRRPMIEAAERTIGVTQARGAHTQVLGIPQP</sequence>
<accession>Q5N0D2</accession>
<feature type="chain" id="PRO_0000409281" description="Chromosome partition protein Smc">
    <location>
        <begin position="1"/>
        <end position="1195"/>
    </location>
</feature>
<feature type="domain" description="SMC hinge">
    <location>
        <begin position="542"/>
        <end position="658"/>
    </location>
</feature>
<feature type="coiled-coil region" evidence="1">
    <location>
        <begin position="185"/>
        <end position="241"/>
    </location>
</feature>
<feature type="coiled-coil region" evidence="1">
    <location>
        <begin position="273"/>
        <end position="348"/>
    </location>
</feature>
<feature type="coiled-coil region" evidence="1">
    <location>
        <begin position="380"/>
        <end position="528"/>
    </location>
</feature>
<feature type="coiled-coil region" evidence="1">
    <location>
        <begin position="698"/>
        <end position="1043"/>
    </location>
</feature>
<feature type="binding site" evidence="1">
    <location>
        <begin position="33"/>
        <end position="40"/>
    </location>
    <ligand>
        <name>ATP</name>
        <dbReference type="ChEBI" id="CHEBI:30616"/>
    </ligand>
</feature>
<protein>
    <recommendedName>
        <fullName evidence="1">Chromosome partition protein Smc</fullName>
    </recommendedName>
</protein>
<reference key="1">
    <citation type="journal article" date="2007" name="Photosyn. Res.">
        <title>Complete nucleotide sequence of the freshwater unicellular cyanobacterium Synechococcus elongatus PCC 6301 chromosome: gene content and organization.</title>
        <authorList>
            <person name="Sugita C."/>
            <person name="Ogata K."/>
            <person name="Shikata M."/>
            <person name="Jikuya H."/>
            <person name="Takano J."/>
            <person name="Furumichi M."/>
            <person name="Kanehisa M."/>
            <person name="Omata T."/>
            <person name="Sugiura M."/>
            <person name="Sugita M."/>
        </authorList>
    </citation>
    <scope>NUCLEOTIDE SEQUENCE [LARGE SCALE GENOMIC DNA]</scope>
    <source>
        <strain>ATCC 27144 / PCC 6301 / SAUG 1402/1</strain>
    </source>
</reference>
<keyword id="KW-0067">ATP-binding</keyword>
<keyword id="KW-0175">Coiled coil</keyword>
<keyword id="KW-0963">Cytoplasm</keyword>
<keyword id="KW-0238">DNA-binding</keyword>
<keyword id="KW-0547">Nucleotide-binding</keyword>
<organism>
    <name type="scientific">Synechococcus sp. (strain ATCC 27144 / PCC 6301 / SAUG 1402/1)</name>
    <name type="common">Anacystis nidulans</name>
    <dbReference type="NCBI Taxonomy" id="269084"/>
    <lineage>
        <taxon>Bacteria</taxon>
        <taxon>Bacillati</taxon>
        <taxon>Cyanobacteriota</taxon>
        <taxon>Cyanophyceae</taxon>
        <taxon>Synechococcales</taxon>
        <taxon>Synechococcaceae</taxon>
        <taxon>Synechococcus</taxon>
    </lineage>
</organism>
<gene>
    <name evidence="1" type="primary">smc</name>
    <name type="ordered locus">syc2048_d</name>
</gene>
<dbReference type="EMBL" id="AP008231">
    <property type="protein sequence ID" value="BAD80238.1"/>
    <property type="status" value="ALT_INIT"/>
    <property type="molecule type" value="Genomic_DNA"/>
</dbReference>
<dbReference type="RefSeq" id="WP_041677034.1">
    <property type="nucleotide sequence ID" value="NC_006576.1"/>
</dbReference>
<dbReference type="SMR" id="Q5N0D2"/>
<dbReference type="KEGG" id="syc:syc2048_d"/>
<dbReference type="eggNOG" id="COG1196">
    <property type="taxonomic scope" value="Bacteria"/>
</dbReference>
<dbReference type="Proteomes" id="UP000001175">
    <property type="component" value="Chromosome"/>
</dbReference>
<dbReference type="GO" id="GO:0005694">
    <property type="term" value="C:chromosome"/>
    <property type="evidence" value="ECO:0007669"/>
    <property type="project" value="InterPro"/>
</dbReference>
<dbReference type="GO" id="GO:0005737">
    <property type="term" value="C:cytoplasm"/>
    <property type="evidence" value="ECO:0007669"/>
    <property type="project" value="UniProtKB-SubCell"/>
</dbReference>
<dbReference type="GO" id="GO:0005524">
    <property type="term" value="F:ATP binding"/>
    <property type="evidence" value="ECO:0007669"/>
    <property type="project" value="UniProtKB-UniRule"/>
</dbReference>
<dbReference type="GO" id="GO:0016887">
    <property type="term" value="F:ATP hydrolysis activity"/>
    <property type="evidence" value="ECO:0007669"/>
    <property type="project" value="InterPro"/>
</dbReference>
<dbReference type="GO" id="GO:0003677">
    <property type="term" value="F:DNA binding"/>
    <property type="evidence" value="ECO:0007669"/>
    <property type="project" value="UniProtKB-UniRule"/>
</dbReference>
<dbReference type="GO" id="GO:0030261">
    <property type="term" value="P:chromosome condensation"/>
    <property type="evidence" value="ECO:0007669"/>
    <property type="project" value="InterPro"/>
</dbReference>
<dbReference type="GO" id="GO:0007059">
    <property type="term" value="P:chromosome segregation"/>
    <property type="evidence" value="ECO:0007669"/>
    <property type="project" value="UniProtKB-UniRule"/>
</dbReference>
<dbReference type="GO" id="GO:0006260">
    <property type="term" value="P:DNA replication"/>
    <property type="evidence" value="ECO:0007669"/>
    <property type="project" value="UniProtKB-UniRule"/>
</dbReference>
<dbReference type="GO" id="GO:0007062">
    <property type="term" value="P:sister chromatid cohesion"/>
    <property type="evidence" value="ECO:0007669"/>
    <property type="project" value="InterPro"/>
</dbReference>
<dbReference type="CDD" id="cd03278">
    <property type="entry name" value="ABC_SMC_barmotin"/>
    <property type="match status" value="1"/>
</dbReference>
<dbReference type="Gene3D" id="1.20.1060.20">
    <property type="match status" value="1"/>
</dbReference>
<dbReference type="Gene3D" id="3.30.70.1620">
    <property type="match status" value="1"/>
</dbReference>
<dbReference type="Gene3D" id="3.40.50.300">
    <property type="entry name" value="P-loop containing nucleotide triphosphate hydrolases"/>
    <property type="match status" value="2"/>
</dbReference>
<dbReference type="HAMAP" id="MF_01894">
    <property type="entry name" value="Smc_prok"/>
    <property type="match status" value="1"/>
</dbReference>
<dbReference type="InterPro" id="IPR027417">
    <property type="entry name" value="P-loop_NTPase"/>
</dbReference>
<dbReference type="InterPro" id="IPR003395">
    <property type="entry name" value="RecF/RecN/SMC_N"/>
</dbReference>
<dbReference type="InterPro" id="IPR024704">
    <property type="entry name" value="SMC"/>
</dbReference>
<dbReference type="InterPro" id="IPR010935">
    <property type="entry name" value="SMC_hinge"/>
</dbReference>
<dbReference type="InterPro" id="IPR036277">
    <property type="entry name" value="SMC_hinge_sf"/>
</dbReference>
<dbReference type="InterPro" id="IPR011890">
    <property type="entry name" value="SMC_prok"/>
</dbReference>
<dbReference type="NCBIfam" id="TIGR02169">
    <property type="entry name" value="SMC_prok_A"/>
    <property type="match status" value="1"/>
</dbReference>
<dbReference type="NCBIfam" id="TIGR02168">
    <property type="entry name" value="SMC_prok_B"/>
    <property type="match status" value="1"/>
</dbReference>
<dbReference type="PANTHER" id="PTHR18937">
    <property type="entry name" value="STRUCTURAL MAINTENANCE OF CHROMOSOMES SMC FAMILY MEMBER"/>
    <property type="match status" value="1"/>
</dbReference>
<dbReference type="Pfam" id="PF06470">
    <property type="entry name" value="SMC_hinge"/>
    <property type="match status" value="1"/>
</dbReference>
<dbReference type="Pfam" id="PF02463">
    <property type="entry name" value="SMC_N"/>
    <property type="match status" value="2"/>
</dbReference>
<dbReference type="PIRSF" id="PIRSF005719">
    <property type="entry name" value="SMC"/>
    <property type="match status" value="1"/>
</dbReference>
<dbReference type="SMART" id="SM00968">
    <property type="entry name" value="SMC_hinge"/>
    <property type="match status" value="1"/>
</dbReference>
<dbReference type="SUPFAM" id="SSF52540">
    <property type="entry name" value="P-loop containing nucleoside triphosphate hydrolases"/>
    <property type="match status" value="1"/>
</dbReference>
<dbReference type="SUPFAM" id="SSF75553">
    <property type="entry name" value="Smc hinge domain"/>
    <property type="match status" value="1"/>
</dbReference>